<comment type="function">
    <text evidence="1">Could be involved in insertion of integral membrane proteins into the membrane.</text>
</comment>
<comment type="subcellular location">
    <subcellularLocation>
        <location evidence="1">Cell membrane</location>
        <topology evidence="1">Peripheral membrane protein</topology>
        <orientation evidence="1">Cytoplasmic side</orientation>
    </subcellularLocation>
</comment>
<comment type="similarity">
    <text evidence="1">Belongs to the UPF0161 family.</text>
</comment>
<sequence>MKRILIAPVRFYQRFISPVFPPSCRFELTCSNYMIQAIEKHGFKGVLMGLARILRCHPWSKTGKDPVPDHFSLKRNQEGE</sequence>
<gene>
    <name type="ordered locus">SPN23F18860</name>
</gene>
<proteinExistence type="inferred from homology"/>
<accession>B8ZNB1</accession>
<reference key="1">
    <citation type="journal article" date="2009" name="J. Bacteriol.">
        <title>Role of conjugative elements in the evolution of the multidrug-resistant pandemic clone Streptococcus pneumoniae Spain23F ST81.</title>
        <authorList>
            <person name="Croucher N.J."/>
            <person name="Walker D."/>
            <person name="Romero P."/>
            <person name="Lennard N."/>
            <person name="Paterson G.K."/>
            <person name="Bason N.C."/>
            <person name="Mitchell A.M."/>
            <person name="Quail M.A."/>
            <person name="Andrew P.W."/>
            <person name="Parkhill J."/>
            <person name="Bentley S.D."/>
            <person name="Mitchell T.J."/>
        </authorList>
    </citation>
    <scope>NUCLEOTIDE SEQUENCE [LARGE SCALE GENOMIC DNA]</scope>
    <source>
        <strain>ATCC 700669 / Spain 23F-1</strain>
    </source>
</reference>
<dbReference type="EMBL" id="FM211187">
    <property type="protein sequence ID" value="CAR69648.1"/>
    <property type="molecule type" value="Genomic_DNA"/>
</dbReference>
<dbReference type="KEGG" id="sne:SPN23F18860"/>
<dbReference type="HOGENOM" id="CLU_144811_5_2_9"/>
<dbReference type="GO" id="GO:0005886">
    <property type="term" value="C:plasma membrane"/>
    <property type="evidence" value="ECO:0007669"/>
    <property type="project" value="UniProtKB-SubCell"/>
</dbReference>
<dbReference type="HAMAP" id="MF_00386">
    <property type="entry name" value="UPF0161_YidD"/>
    <property type="match status" value="1"/>
</dbReference>
<dbReference type="InterPro" id="IPR002696">
    <property type="entry name" value="Membr_insert_effic_factor_YidD"/>
</dbReference>
<dbReference type="NCBIfam" id="TIGR00278">
    <property type="entry name" value="membrane protein insertion efficiency factor YidD"/>
    <property type="match status" value="1"/>
</dbReference>
<dbReference type="PANTHER" id="PTHR33383">
    <property type="entry name" value="MEMBRANE PROTEIN INSERTION EFFICIENCY FACTOR-RELATED"/>
    <property type="match status" value="1"/>
</dbReference>
<dbReference type="PANTHER" id="PTHR33383:SF1">
    <property type="entry name" value="MEMBRANE PROTEIN INSERTION EFFICIENCY FACTOR-RELATED"/>
    <property type="match status" value="1"/>
</dbReference>
<dbReference type="Pfam" id="PF01809">
    <property type="entry name" value="YidD"/>
    <property type="match status" value="1"/>
</dbReference>
<dbReference type="SMART" id="SM01234">
    <property type="entry name" value="Haemolytic"/>
    <property type="match status" value="1"/>
</dbReference>
<feature type="chain" id="PRO_1000197785" description="Putative membrane protein insertion efficiency factor">
    <location>
        <begin position="1"/>
        <end position="80"/>
    </location>
</feature>
<feature type="region of interest" description="Disordered" evidence="2">
    <location>
        <begin position="61"/>
        <end position="80"/>
    </location>
</feature>
<feature type="compositionally biased region" description="Basic and acidic residues" evidence="2">
    <location>
        <begin position="62"/>
        <end position="80"/>
    </location>
</feature>
<keyword id="KW-1003">Cell membrane</keyword>
<keyword id="KW-0472">Membrane</keyword>
<organism>
    <name type="scientific">Streptococcus pneumoniae (strain ATCC 700669 / Spain 23F-1)</name>
    <dbReference type="NCBI Taxonomy" id="561276"/>
    <lineage>
        <taxon>Bacteria</taxon>
        <taxon>Bacillati</taxon>
        <taxon>Bacillota</taxon>
        <taxon>Bacilli</taxon>
        <taxon>Lactobacillales</taxon>
        <taxon>Streptococcaceae</taxon>
        <taxon>Streptococcus</taxon>
    </lineage>
</organism>
<evidence type="ECO:0000255" key="1">
    <source>
        <dbReference type="HAMAP-Rule" id="MF_00386"/>
    </source>
</evidence>
<evidence type="ECO:0000256" key="2">
    <source>
        <dbReference type="SAM" id="MobiDB-lite"/>
    </source>
</evidence>
<protein>
    <recommendedName>
        <fullName evidence="1">Putative membrane protein insertion efficiency factor</fullName>
    </recommendedName>
</protein>
<name>YIDD_STRPJ</name>